<proteinExistence type="evidence at protein level"/>
<gene>
    <name type="primary">cyp6</name>
    <name type="ORF">SPBC17G9.05</name>
</gene>
<reference key="1">
    <citation type="journal article" date="2002" name="Nature">
        <title>The genome sequence of Schizosaccharomyces pombe.</title>
        <authorList>
            <person name="Wood V."/>
            <person name="Gwilliam R."/>
            <person name="Rajandream M.A."/>
            <person name="Lyne M.H."/>
            <person name="Lyne R."/>
            <person name="Stewart A."/>
            <person name="Sgouros J.G."/>
            <person name="Peat N."/>
            <person name="Hayles J."/>
            <person name="Baker S.G."/>
            <person name="Basham D."/>
            <person name="Bowman S."/>
            <person name="Brooks K."/>
            <person name="Brown D."/>
            <person name="Brown S."/>
            <person name="Chillingworth T."/>
            <person name="Churcher C.M."/>
            <person name="Collins M."/>
            <person name="Connor R."/>
            <person name="Cronin A."/>
            <person name="Davis P."/>
            <person name="Feltwell T."/>
            <person name="Fraser A."/>
            <person name="Gentles S."/>
            <person name="Goble A."/>
            <person name="Hamlin N."/>
            <person name="Harris D.E."/>
            <person name="Hidalgo J."/>
            <person name="Hodgson G."/>
            <person name="Holroyd S."/>
            <person name="Hornsby T."/>
            <person name="Howarth S."/>
            <person name="Huckle E.J."/>
            <person name="Hunt S."/>
            <person name="Jagels K."/>
            <person name="James K.D."/>
            <person name="Jones L."/>
            <person name="Jones M."/>
            <person name="Leather S."/>
            <person name="McDonald S."/>
            <person name="McLean J."/>
            <person name="Mooney P."/>
            <person name="Moule S."/>
            <person name="Mungall K.L."/>
            <person name="Murphy L.D."/>
            <person name="Niblett D."/>
            <person name="Odell C."/>
            <person name="Oliver K."/>
            <person name="O'Neil S."/>
            <person name="Pearson D."/>
            <person name="Quail M.A."/>
            <person name="Rabbinowitsch E."/>
            <person name="Rutherford K.M."/>
            <person name="Rutter S."/>
            <person name="Saunders D."/>
            <person name="Seeger K."/>
            <person name="Sharp S."/>
            <person name="Skelton J."/>
            <person name="Simmonds M.N."/>
            <person name="Squares R."/>
            <person name="Squares S."/>
            <person name="Stevens K."/>
            <person name="Taylor K."/>
            <person name="Taylor R.G."/>
            <person name="Tivey A."/>
            <person name="Walsh S.V."/>
            <person name="Warren T."/>
            <person name="Whitehead S."/>
            <person name="Woodward J.R."/>
            <person name="Volckaert G."/>
            <person name="Aert R."/>
            <person name="Robben J."/>
            <person name="Grymonprez B."/>
            <person name="Weltjens I."/>
            <person name="Vanstreels E."/>
            <person name="Rieger M."/>
            <person name="Schaefer M."/>
            <person name="Mueller-Auer S."/>
            <person name="Gabel C."/>
            <person name="Fuchs M."/>
            <person name="Duesterhoeft A."/>
            <person name="Fritzc C."/>
            <person name="Holzer E."/>
            <person name="Moestl D."/>
            <person name="Hilbert H."/>
            <person name="Borzym K."/>
            <person name="Langer I."/>
            <person name="Beck A."/>
            <person name="Lehrach H."/>
            <person name="Reinhardt R."/>
            <person name="Pohl T.M."/>
            <person name="Eger P."/>
            <person name="Zimmermann W."/>
            <person name="Wedler H."/>
            <person name="Wambutt R."/>
            <person name="Purnelle B."/>
            <person name="Goffeau A."/>
            <person name="Cadieu E."/>
            <person name="Dreano S."/>
            <person name="Gloux S."/>
            <person name="Lelaure V."/>
            <person name="Mottier S."/>
            <person name="Galibert F."/>
            <person name="Aves S.J."/>
            <person name="Xiang Z."/>
            <person name="Hunt C."/>
            <person name="Moore K."/>
            <person name="Hurst S.M."/>
            <person name="Lucas M."/>
            <person name="Rochet M."/>
            <person name="Gaillardin C."/>
            <person name="Tallada V.A."/>
            <person name="Garzon A."/>
            <person name="Thode G."/>
            <person name="Daga R.R."/>
            <person name="Cruzado L."/>
            <person name="Jimenez J."/>
            <person name="Sanchez M."/>
            <person name="del Rey F."/>
            <person name="Benito J."/>
            <person name="Dominguez A."/>
            <person name="Revuelta J.L."/>
            <person name="Moreno S."/>
            <person name="Armstrong J."/>
            <person name="Forsburg S.L."/>
            <person name="Cerutti L."/>
            <person name="Lowe T."/>
            <person name="McCombie W.R."/>
            <person name="Paulsen I."/>
            <person name="Potashkin J."/>
            <person name="Shpakovski G.V."/>
            <person name="Ussery D."/>
            <person name="Barrell B.G."/>
            <person name="Nurse P."/>
        </authorList>
    </citation>
    <scope>NUCLEOTIDE SEQUENCE [LARGE SCALE GENOMIC DNA]</scope>
    <source>
        <strain>972 / ATCC 24843</strain>
    </source>
</reference>
<reference key="2">
    <citation type="journal article" date="2005" name="Yeast">
        <title>The cyclophilin repertoire of the fission yeast Schizosaccharomyces pombe.</title>
        <authorList>
            <person name="Pemberton T.J."/>
            <person name="Kay J.E."/>
        </authorList>
    </citation>
    <scope>INDUCTION</scope>
    <scope>SUBCELLULAR LOCATION</scope>
</reference>
<reference key="3">
    <citation type="journal article" date="2008" name="J. Proteome Res.">
        <title>Phosphoproteome analysis of fission yeast.</title>
        <authorList>
            <person name="Wilson-Grady J.T."/>
            <person name="Villen J."/>
            <person name="Gygi S.P."/>
        </authorList>
    </citation>
    <scope>PHOSPHORYLATION [LARGE SCALE ANALYSIS] AT SER-206</scope>
    <scope>IDENTIFICATION BY MASS SPECTROMETRY</scope>
</reference>
<dbReference type="EC" id="5.2.1.8"/>
<dbReference type="EMBL" id="CU329671">
    <property type="protein sequence ID" value="CAB52803.1"/>
    <property type="molecule type" value="Genomic_DNA"/>
</dbReference>
<dbReference type="PIR" id="T39728">
    <property type="entry name" value="T39728"/>
</dbReference>
<dbReference type="RefSeq" id="NP_595894.1">
    <property type="nucleotide sequence ID" value="NM_001021801.2"/>
</dbReference>
<dbReference type="SMR" id="Q9UUE4"/>
<dbReference type="BioGRID" id="276486">
    <property type="interactions" value="6"/>
</dbReference>
<dbReference type="FunCoup" id="Q9UUE4">
    <property type="interactions" value="1100"/>
</dbReference>
<dbReference type="STRING" id="284812.Q9UUE4"/>
<dbReference type="iPTMnet" id="Q9UUE4"/>
<dbReference type="PaxDb" id="4896-SPBC17G9.05.1"/>
<dbReference type="EnsemblFungi" id="SPBC17G9.05.1">
    <property type="protein sequence ID" value="SPBC17G9.05.1:pep"/>
    <property type="gene ID" value="SPBC17G9.05"/>
</dbReference>
<dbReference type="GeneID" id="2539942"/>
<dbReference type="KEGG" id="spo:2539942"/>
<dbReference type="PomBase" id="SPBC17G9.05"/>
<dbReference type="VEuPathDB" id="FungiDB:SPBC17G9.05"/>
<dbReference type="eggNOG" id="KOG0415">
    <property type="taxonomic scope" value="Eukaryota"/>
</dbReference>
<dbReference type="HOGENOM" id="CLU_018791_2_0_1"/>
<dbReference type="InParanoid" id="Q9UUE4"/>
<dbReference type="OMA" id="APKCCEN"/>
<dbReference type="PhylomeDB" id="Q9UUE4"/>
<dbReference type="Reactome" id="R-SPO-72163">
    <property type="pathway name" value="mRNA Splicing - Major Pathway"/>
</dbReference>
<dbReference type="PRO" id="PR:Q9UUE4"/>
<dbReference type="Proteomes" id="UP000002485">
    <property type="component" value="Chromosome II"/>
</dbReference>
<dbReference type="GO" id="GO:0000785">
    <property type="term" value="C:chromatin"/>
    <property type="evidence" value="ECO:0000314"/>
    <property type="project" value="PomBase"/>
</dbReference>
<dbReference type="GO" id="GO:0005634">
    <property type="term" value="C:nucleus"/>
    <property type="evidence" value="ECO:0000314"/>
    <property type="project" value="PomBase"/>
</dbReference>
<dbReference type="GO" id="GO:0003755">
    <property type="term" value="F:peptidyl-prolyl cis-trans isomerase activity"/>
    <property type="evidence" value="ECO:0007669"/>
    <property type="project" value="UniProtKB-KW"/>
</dbReference>
<dbReference type="GO" id="GO:0003723">
    <property type="term" value="F:RNA binding"/>
    <property type="evidence" value="ECO:0000303"/>
    <property type="project" value="PomBase"/>
</dbReference>
<dbReference type="GO" id="GO:0006357">
    <property type="term" value="P:regulation of transcription by RNA polymerase II"/>
    <property type="evidence" value="ECO:0000316"/>
    <property type="project" value="PomBase"/>
</dbReference>
<dbReference type="CDD" id="cd01921">
    <property type="entry name" value="cyclophilin_RRM"/>
    <property type="match status" value="1"/>
</dbReference>
<dbReference type="CDD" id="cd12235">
    <property type="entry name" value="RRM_PPIL4"/>
    <property type="match status" value="1"/>
</dbReference>
<dbReference type="FunFam" id="2.40.100.10:FF:000015">
    <property type="entry name" value="Peptidyl-prolyl cis-trans isomerase"/>
    <property type="match status" value="1"/>
</dbReference>
<dbReference type="FunFam" id="3.30.70.330:FF:000287">
    <property type="entry name" value="Peptidyl-prolyl cis-trans isomerase"/>
    <property type="match status" value="1"/>
</dbReference>
<dbReference type="Gene3D" id="3.30.70.330">
    <property type="match status" value="1"/>
</dbReference>
<dbReference type="Gene3D" id="2.40.100.10">
    <property type="entry name" value="Cyclophilin-like"/>
    <property type="match status" value="1"/>
</dbReference>
<dbReference type="InterPro" id="IPR035542">
    <property type="entry name" value="CRIP"/>
</dbReference>
<dbReference type="InterPro" id="IPR029000">
    <property type="entry name" value="Cyclophilin-like_dom_sf"/>
</dbReference>
<dbReference type="InterPro" id="IPR002130">
    <property type="entry name" value="Cyclophilin-type_PPIase_dom"/>
</dbReference>
<dbReference type="InterPro" id="IPR035538">
    <property type="entry name" value="Cyclophilin_PPIL4"/>
</dbReference>
<dbReference type="InterPro" id="IPR012677">
    <property type="entry name" value="Nucleotide-bd_a/b_plait_sf"/>
</dbReference>
<dbReference type="InterPro" id="IPR035979">
    <property type="entry name" value="RBD_domain_sf"/>
</dbReference>
<dbReference type="InterPro" id="IPR000504">
    <property type="entry name" value="RRM_dom"/>
</dbReference>
<dbReference type="PANTHER" id="PTHR45843">
    <property type="entry name" value="PEPTIDYL-PROLYL CIS-TRANS ISOMERASE-LIKE 4"/>
    <property type="match status" value="1"/>
</dbReference>
<dbReference type="PANTHER" id="PTHR45843:SF1">
    <property type="entry name" value="PEPTIDYL-PROLYL CIS-TRANS ISOMERASE-LIKE 4"/>
    <property type="match status" value="1"/>
</dbReference>
<dbReference type="Pfam" id="PF00160">
    <property type="entry name" value="Pro_isomerase"/>
    <property type="match status" value="1"/>
</dbReference>
<dbReference type="Pfam" id="PF00076">
    <property type="entry name" value="RRM_1"/>
    <property type="match status" value="1"/>
</dbReference>
<dbReference type="PRINTS" id="PR00153">
    <property type="entry name" value="CSAPPISMRASE"/>
</dbReference>
<dbReference type="SMART" id="SM00360">
    <property type="entry name" value="RRM"/>
    <property type="match status" value="1"/>
</dbReference>
<dbReference type="SUPFAM" id="SSF50891">
    <property type="entry name" value="Cyclophilin-like"/>
    <property type="match status" value="1"/>
</dbReference>
<dbReference type="SUPFAM" id="SSF54928">
    <property type="entry name" value="RNA-binding domain, RBD"/>
    <property type="match status" value="1"/>
</dbReference>
<dbReference type="PROSITE" id="PS50072">
    <property type="entry name" value="CSA_PPIASE_2"/>
    <property type="match status" value="1"/>
</dbReference>
<dbReference type="PROSITE" id="PS50102">
    <property type="entry name" value="RRM"/>
    <property type="match status" value="1"/>
</dbReference>
<name>PPIL4_SCHPO</name>
<sequence length="432" mass="50776">MSVLIETTVGDLVIDLFVKEAPKTCENFLKLCKLKYYNFCPFYNIQHNYTCQTGDPLGPTGDGGRCVWNVLNKGTRFFKAEFNPSLVHNKMGLVSMSTATISSRDDKLLVCGSQFIITLSDNLEGLDERYPIYGQVAEGFDTLLKINDAICDEEGQPYRDIRIKHTIILDDPFEDPPDLVEPLRSPSPTPEQLATVRIGENEQIESETSEDKLQREKEMEAEAEAVTLEMIGDLPFAHVAPPENVLFVCKLNPVTQDEDLELIFSRFGKIISCQVIRDKETGDSLQYAFIEFDNKESVEKAYFKMQNVLIDDSRIHVDFSQSVARYRQYYNSNRDRKRSSSRSDDREYHRRSDGRYDRSNYRDDYRHRRKERDHRDDQSSFRNERFSNYYGDDRSYHKRRNTGNKNCDDHLRDKSPERRYRYDRRYRDDRYR</sequence>
<organism>
    <name type="scientific">Schizosaccharomyces pombe (strain 972 / ATCC 24843)</name>
    <name type="common">Fission yeast</name>
    <dbReference type="NCBI Taxonomy" id="284812"/>
    <lineage>
        <taxon>Eukaryota</taxon>
        <taxon>Fungi</taxon>
        <taxon>Dikarya</taxon>
        <taxon>Ascomycota</taxon>
        <taxon>Taphrinomycotina</taxon>
        <taxon>Schizosaccharomycetes</taxon>
        <taxon>Schizosaccharomycetales</taxon>
        <taxon>Schizosaccharomycetaceae</taxon>
        <taxon>Schizosaccharomyces</taxon>
    </lineage>
</organism>
<comment type="function">
    <text evidence="1">PPIases accelerate the folding of proteins. It catalyzes the cis-trans isomerization of proline imidic peptide bonds in oligopeptides (By similarity).</text>
</comment>
<comment type="catalytic activity">
    <reaction>
        <text>[protein]-peptidylproline (omega=180) = [protein]-peptidylproline (omega=0)</text>
        <dbReference type="Rhea" id="RHEA:16237"/>
        <dbReference type="Rhea" id="RHEA-COMP:10747"/>
        <dbReference type="Rhea" id="RHEA-COMP:10748"/>
        <dbReference type="ChEBI" id="CHEBI:83833"/>
        <dbReference type="ChEBI" id="CHEBI:83834"/>
        <dbReference type="EC" id="5.2.1.8"/>
    </reaction>
</comment>
<comment type="subcellular location">
    <subcellularLocation>
        <location evidence="5">Nucleus</location>
    </subcellularLocation>
</comment>
<comment type="induction">
    <text evidence="5">Induced during the meiotic cycle.</text>
</comment>
<comment type="similarity">
    <text evidence="7">Belongs to the cyclophilin-type PPIase family. PPIL4 subfamily.</text>
</comment>
<accession>Q9UUE4</accession>
<keyword id="KW-0413">Isomerase</keyword>
<keyword id="KW-0539">Nucleus</keyword>
<keyword id="KW-0597">Phosphoprotein</keyword>
<keyword id="KW-1185">Reference proteome</keyword>
<keyword id="KW-0694">RNA-binding</keyword>
<keyword id="KW-0697">Rotamase</keyword>
<feature type="chain" id="PRO_0000232980" description="Peptidyl-prolyl cis-trans isomerase cyp6">
    <location>
        <begin position="1"/>
        <end position="432"/>
    </location>
</feature>
<feature type="domain" description="PPIase cyclophilin-type" evidence="2">
    <location>
        <begin position="1"/>
        <end position="168"/>
    </location>
</feature>
<feature type="domain" description="RRM" evidence="3">
    <location>
        <begin position="244"/>
        <end position="322"/>
    </location>
</feature>
<feature type="region of interest" description="Disordered" evidence="4">
    <location>
        <begin position="330"/>
        <end position="432"/>
    </location>
</feature>
<feature type="compositionally biased region" description="Basic and acidic residues" evidence="4">
    <location>
        <begin position="341"/>
        <end position="366"/>
    </location>
</feature>
<feature type="compositionally biased region" description="Basic and acidic residues" evidence="4">
    <location>
        <begin position="373"/>
        <end position="395"/>
    </location>
</feature>
<feature type="compositionally biased region" description="Basic and acidic residues" evidence="4">
    <location>
        <begin position="406"/>
        <end position="432"/>
    </location>
</feature>
<feature type="modified residue" description="Phosphoserine" evidence="6">
    <location>
        <position position="206"/>
    </location>
</feature>
<evidence type="ECO:0000250" key="1"/>
<evidence type="ECO:0000255" key="2">
    <source>
        <dbReference type="PROSITE-ProRule" id="PRU00156"/>
    </source>
</evidence>
<evidence type="ECO:0000255" key="3">
    <source>
        <dbReference type="PROSITE-ProRule" id="PRU00176"/>
    </source>
</evidence>
<evidence type="ECO:0000256" key="4">
    <source>
        <dbReference type="SAM" id="MobiDB-lite"/>
    </source>
</evidence>
<evidence type="ECO:0000269" key="5">
    <source>
    </source>
</evidence>
<evidence type="ECO:0000269" key="6">
    <source>
    </source>
</evidence>
<evidence type="ECO:0000305" key="7"/>
<protein>
    <recommendedName>
        <fullName>Peptidyl-prolyl cis-trans isomerase cyp6</fullName>
        <shortName>PPIase cyp6</shortName>
        <ecNumber>5.2.1.8</ecNumber>
    </recommendedName>
    <alternativeName>
        <fullName>Rotamase cyp6</fullName>
    </alternativeName>
</protein>